<organism>
    <name type="scientific">Arabidopsis thaliana</name>
    <name type="common">Mouse-ear cress</name>
    <dbReference type="NCBI Taxonomy" id="3702"/>
    <lineage>
        <taxon>Eukaryota</taxon>
        <taxon>Viridiplantae</taxon>
        <taxon>Streptophyta</taxon>
        <taxon>Embryophyta</taxon>
        <taxon>Tracheophyta</taxon>
        <taxon>Spermatophyta</taxon>
        <taxon>Magnoliopsida</taxon>
        <taxon>eudicotyledons</taxon>
        <taxon>Gunneridae</taxon>
        <taxon>Pentapetalae</taxon>
        <taxon>rosids</taxon>
        <taxon>malvids</taxon>
        <taxon>Brassicales</taxon>
        <taxon>Brassicaceae</taxon>
        <taxon>Camelineae</taxon>
        <taxon>Arabidopsis</taxon>
    </lineage>
</organism>
<comment type="function">
    <text evidence="1">Putative microtubule-associated force-producing protein, able to bind and hydrolyze GTP.</text>
</comment>
<comment type="subcellular location">
    <subcellularLocation>
        <location evidence="1">Cytoplasm</location>
    </subcellularLocation>
    <subcellularLocation>
        <location evidence="1">Cytoplasm</location>
        <location evidence="1">Cytoskeleton</location>
    </subcellularLocation>
    <text evidence="1">Microtubule-associated.</text>
</comment>
<comment type="similarity">
    <text evidence="3">Belongs to the TRAFAC class dynamin-like GTPase superfamily. Dynamin/Fzo/YdjA family.</text>
</comment>
<accession>Q9ZP55</accession>
<feature type="chain" id="PRO_0000415907" description="Dynamin-related protein 4C">
    <location>
        <begin position="1"/>
        <end position="669"/>
    </location>
</feature>
<feature type="domain" description="Dynamin-type G" evidence="3">
    <location>
        <begin position="62"/>
        <end position="323"/>
    </location>
</feature>
<feature type="domain" description="GED" evidence="2">
    <location>
        <begin position="575"/>
        <end position="669"/>
    </location>
</feature>
<feature type="region of interest" description="Disordered" evidence="4">
    <location>
        <begin position="1"/>
        <end position="21"/>
    </location>
</feature>
<feature type="region of interest" description="G1 motif" evidence="3">
    <location>
        <begin position="72"/>
        <end position="79"/>
    </location>
</feature>
<feature type="region of interest" description="G2 motif" evidence="3">
    <location>
        <begin position="97"/>
        <end position="99"/>
    </location>
</feature>
<feature type="region of interest" description="G3 motif" evidence="3">
    <location>
        <begin position="171"/>
        <end position="174"/>
    </location>
</feature>
<feature type="region of interest" description="G4 motif" evidence="3">
    <location>
        <begin position="240"/>
        <end position="243"/>
    </location>
</feature>
<feature type="region of interest" description="G5 motif" evidence="3">
    <location>
        <position position="273"/>
    </location>
</feature>
<feature type="binding site" evidence="1">
    <location>
        <begin position="72"/>
        <end position="79"/>
    </location>
    <ligand>
        <name>GTP</name>
        <dbReference type="ChEBI" id="CHEBI:37565"/>
    </ligand>
</feature>
<feature type="binding site" evidence="1">
    <location>
        <begin position="171"/>
        <end position="175"/>
    </location>
    <ligand>
        <name>GTP</name>
        <dbReference type="ChEBI" id="CHEBI:37565"/>
    </ligand>
</feature>
<feature type="binding site" evidence="1">
    <location>
        <begin position="240"/>
        <end position="243"/>
    </location>
    <ligand>
        <name>GTP</name>
        <dbReference type="ChEBI" id="CHEBI:37565"/>
    </ligand>
</feature>
<dbReference type="EMBL" id="AC002292">
    <property type="protein sequence ID" value="AAB71966.1"/>
    <property type="molecule type" value="Genomic_DNA"/>
</dbReference>
<dbReference type="EMBL" id="CP002684">
    <property type="protein sequence ID" value="AEE33694.1"/>
    <property type="molecule type" value="Genomic_DNA"/>
</dbReference>
<dbReference type="PIR" id="C96630">
    <property type="entry name" value="C96630"/>
</dbReference>
<dbReference type="RefSeq" id="NP_176252.1">
    <property type="nucleotide sequence ID" value="NM_104736.2"/>
</dbReference>
<dbReference type="SMR" id="Q9ZP55"/>
<dbReference type="FunCoup" id="Q9ZP55">
    <property type="interactions" value="79"/>
</dbReference>
<dbReference type="STRING" id="3702.Q9ZP55"/>
<dbReference type="PaxDb" id="3702-AT1G60500.1"/>
<dbReference type="ProteomicsDB" id="224369"/>
<dbReference type="EnsemblPlants" id="AT1G60500.1">
    <property type="protein sequence ID" value="AT1G60500.1"/>
    <property type="gene ID" value="AT1G60500"/>
</dbReference>
<dbReference type="GeneID" id="842345"/>
<dbReference type="Gramene" id="AT1G60500.1">
    <property type="protein sequence ID" value="AT1G60500.1"/>
    <property type="gene ID" value="AT1G60500"/>
</dbReference>
<dbReference type="KEGG" id="ath:AT1G60500"/>
<dbReference type="Araport" id="AT1G60500"/>
<dbReference type="TAIR" id="AT1G60500">
    <property type="gene designation" value="DRP4C"/>
</dbReference>
<dbReference type="eggNOG" id="KOG0446">
    <property type="taxonomic scope" value="Eukaryota"/>
</dbReference>
<dbReference type="HOGENOM" id="CLU_008964_8_3_1"/>
<dbReference type="InParanoid" id="Q9ZP55"/>
<dbReference type="OMA" id="NFANFHN"/>
<dbReference type="PhylomeDB" id="Q9ZP55"/>
<dbReference type="PRO" id="PR:Q9ZP55"/>
<dbReference type="Proteomes" id="UP000006548">
    <property type="component" value="Chromosome 1"/>
</dbReference>
<dbReference type="ExpressionAtlas" id="Q9ZP55">
    <property type="expression patterns" value="baseline and differential"/>
</dbReference>
<dbReference type="GO" id="GO:0005737">
    <property type="term" value="C:cytoplasm"/>
    <property type="evidence" value="ECO:0007669"/>
    <property type="project" value="UniProtKB-SubCell"/>
</dbReference>
<dbReference type="GO" id="GO:0005874">
    <property type="term" value="C:microtubule"/>
    <property type="evidence" value="ECO:0007669"/>
    <property type="project" value="UniProtKB-KW"/>
</dbReference>
<dbReference type="GO" id="GO:0005525">
    <property type="term" value="F:GTP binding"/>
    <property type="evidence" value="ECO:0007669"/>
    <property type="project" value="UniProtKB-KW"/>
</dbReference>
<dbReference type="GO" id="GO:0003924">
    <property type="term" value="F:GTPase activity"/>
    <property type="evidence" value="ECO:0007669"/>
    <property type="project" value="InterPro"/>
</dbReference>
<dbReference type="CDD" id="cd08771">
    <property type="entry name" value="DLP_1"/>
    <property type="match status" value="1"/>
</dbReference>
<dbReference type="FunFam" id="3.40.50.300:FF:001237">
    <property type="entry name" value="Dynamin-related protein 4C"/>
    <property type="match status" value="1"/>
</dbReference>
<dbReference type="Gene3D" id="1.20.120.1240">
    <property type="entry name" value="Dynamin, middle domain"/>
    <property type="match status" value="1"/>
</dbReference>
<dbReference type="Gene3D" id="3.40.50.300">
    <property type="entry name" value="P-loop containing nucleotide triphosphate hydrolases"/>
    <property type="match status" value="1"/>
</dbReference>
<dbReference type="InterPro" id="IPR022812">
    <property type="entry name" value="Dynamin"/>
</dbReference>
<dbReference type="InterPro" id="IPR001401">
    <property type="entry name" value="Dynamin_GTPase"/>
</dbReference>
<dbReference type="InterPro" id="IPR045063">
    <property type="entry name" value="Dynamin_N"/>
</dbReference>
<dbReference type="InterPro" id="IPR000375">
    <property type="entry name" value="Dynamin_stalk"/>
</dbReference>
<dbReference type="InterPro" id="IPR030381">
    <property type="entry name" value="G_DYNAMIN_dom"/>
</dbReference>
<dbReference type="InterPro" id="IPR003130">
    <property type="entry name" value="GED"/>
</dbReference>
<dbReference type="InterPro" id="IPR020850">
    <property type="entry name" value="GED_dom"/>
</dbReference>
<dbReference type="InterPro" id="IPR027417">
    <property type="entry name" value="P-loop_NTPase"/>
</dbReference>
<dbReference type="PANTHER" id="PTHR11566">
    <property type="entry name" value="DYNAMIN"/>
    <property type="match status" value="1"/>
</dbReference>
<dbReference type="PANTHER" id="PTHR11566:SF173">
    <property type="entry name" value="DYNAMIN-RELATED PROTEIN 4C"/>
    <property type="match status" value="1"/>
</dbReference>
<dbReference type="Pfam" id="PF01031">
    <property type="entry name" value="Dynamin_M"/>
    <property type="match status" value="1"/>
</dbReference>
<dbReference type="Pfam" id="PF00350">
    <property type="entry name" value="Dynamin_N"/>
    <property type="match status" value="1"/>
</dbReference>
<dbReference type="Pfam" id="PF02212">
    <property type="entry name" value="GED"/>
    <property type="match status" value="1"/>
</dbReference>
<dbReference type="PRINTS" id="PR00195">
    <property type="entry name" value="DYNAMIN"/>
</dbReference>
<dbReference type="SMART" id="SM00053">
    <property type="entry name" value="DYNc"/>
    <property type="match status" value="1"/>
</dbReference>
<dbReference type="SMART" id="SM00302">
    <property type="entry name" value="GED"/>
    <property type="match status" value="1"/>
</dbReference>
<dbReference type="SUPFAM" id="SSF52540">
    <property type="entry name" value="P-loop containing nucleoside triphosphate hydrolases"/>
    <property type="match status" value="1"/>
</dbReference>
<dbReference type="PROSITE" id="PS51718">
    <property type="entry name" value="G_DYNAMIN_2"/>
    <property type="match status" value="1"/>
</dbReference>
<dbReference type="PROSITE" id="PS51388">
    <property type="entry name" value="GED"/>
    <property type="match status" value="1"/>
</dbReference>
<keyword id="KW-0963">Cytoplasm</keyword>
<keyword id="KW-0206">Cytoskeleton</keyword>
<keyword id="KW-0342">GTP-binding</keyword>
<keyword id="KW-0378">Hydrolase</keyword>
<keyword id="KW-0493">Microtubule</keyword>
<keyword id="KW-0505">Motor protein</keyword>
<keyword id="KW-0547">Nucleotide-binding</keyword>
<keyword id="KW-1185">Reference proteome</keyword>
<gene>
    <name type="primary">DRP4C</name>
    <name type="ordered locus">At1g60500</name>
    <name type="ORF">F8A5.5</name>
</gene>
<sequence>MVKKKVATKKNSPSLAIAKKKSRSNKDVVSVEAPIISSYNDRIRPLLDTVDRLRNLNVMREGIHLPTIVVVGDQSSGKSSVLESLAGISLPRGQGICTRVPLVMRLQRSSSPEPEIWLEYNDKVVPTDEEHIAEAIRAATDVIAGSGKGVSDAPLTLHVKKAGVPDLTMVDLPGITRVPVNGQPENIYEQISGMIMEYIEPQESIILNVLSATVDFTTCESIRMSRKVDKTGQRTLAVVTKADMAPEGLLQKVTADDVSIVLGYVCVRNRIGEETYEEARMQEELLFRTHPVLSLIDEDIVGIPVLAQKLMLIQSSMIARCLPKIVSKINQKLDTAVLELNKLPMVMASTGEALMALMDIIGSAKESLLRILVQGDFSEYPDDQNMHCTARLADMLSQFSDSLQAKPKEVAEFLMDEIKILDECKCVGLPNFIPRSAFLAILSQHVDGIQDKPVEFINKIWDYIEDVLSSVTAKRSDNFPQIQSSIKRAGRNLISKIKEQSVNRVMEIVEMEKLTDYTCNPEYMTSWTQKTSAQESFIDAVVKNENIPDYFSVTGFGNVKISHLRKYHAHLLIPAFDMKMRITSYWKIVLRRIVDNLALYLQLSVKSLVNTRFQKEIVAEMVDPRDGGGVEKMLEESPLVASKREKLQNSIKLLKESKDAVAAIVDQNC</sequence>
<evidence type="ECO:0000250" key="1"/>
<evidence type="ECO:0000255" key="2">
    <source>
        <dbReference type="PROSITE-ProRule" id="PRU00720"/>
    </source>
</evidence>
<evidence type="ECO:0000255" key="3">
    <source>
        <dbReference type="PROSITE-ProRule" id="PRU01055"/>
    </source>
</evidence>
<evidence type="ECO:0000256" key="4">
    <source>
        <dbReference type="SAM" id="MobiDB-lite"/>
    </source>
</evidence>
<reference key="1">
    <citation type="journal article" date="2000" name="Nature">
        <title>Sequence and analysis of chromosome 1 of the plant Arabidopsis thaliana.</title>
        <authorList>
            <person name="Theologis A."/>
            <person name="Ecker J.R."/>
            <person name="Palm C.J."/>
            <person name="Federspiel N.A."/>
            <person name="Kaul S."/>
            <person name="White O."/>
            <person name="Alonso J."/>
            <person name="Altafi H."/>
            <person name="Araujo R."/>
            <person name="Bowman C.L."/>
            <person name="Brooks S.Y."/>
            <person name="Buehler E."/>
            <person name="Chan A."/>
            <person name="Chao Q."/>
            <person name="Chen H."/>
            <person name="Cheuk R.F."/>
            <person name="Chin C.W."/>
            <person name="Chung M.K."/>
            <person name="Conn L."/>
            <person name="Conway A.B."/>
            <person name="Conway A.R."/>
            <person name="Creasy T.H."/>
            <person name="Dewar K."/>
            <person name="Dunn P."/>
            <person name="Etgu P."/>
            <person name="Feldblyum T.V."/>
            <person name="Feng J.-D."/>
            <person name="Fong B."/>
            <person name="Fujii C.Y."/>
            <person name="Gill J.E."/>
            <person name="Goldsmith A.D."/>
            <person name="Haas B."/>
            <person name="Hansen N.F."/>
            <person name="Hughes B."/>
            <person name="Huizar L."/>
            <person name="Hunter J.L."/>
            <person name="Jenkins J."/>
            <person name="Johnson-Hopson C."/>
            <person name="Khan S."/>
            <person name="Khaykin E."/>
            <person name="Kim C.J."/>
            <person name="Koo H.L."/>
            <person name="Kremenetskaia I."/>
            <person name="Kurtz D.B."/>
            <person name="Kwan A."/>
            <person name="Lam B."/>
            <person name="Langin-Hooper S."/>
            <person name="Lee A."/>
            <person name="Lee J.M."/>
            <person name="Lenz C.A."/>
            <person name="Li J.H."/>
            <person name="Li Y.-P."/>
            <person name="Lin X."/>
            <person name="Liu S.X."/>
            <person name="Liu Z.A."/>
            <person name="Luros J.S."/>
            <person name="Maiti R."/>
            <person name="Marziali A."/>
            <person name="Militscher J."/>
            <person name="Miranda M."/>
            <person name="Nguyen M."/>
            <person name="Nierman W.C."/>
            <person name="Osborne B.I."/>
            <person name="Pai G."/>
            <person name="Peterson J."/>
            <person name="Pham P.K."/>
            <person name="Rizzo M."/>
            <person name="Rooney T."/>
            <person name="Rowley D."/>
            <person name="Sakano H."/>
            <person name="Salzberg S.L."/>
            <person name="Schwartz J.R."/>
            <person name="Shinn P."/>
            <person name="Southwick A.M."/>
            <person name="Sun H."/>
            <person name="Tallon L.J."/>
            <person name="Tambunga G."/>
            <person name="Toriumi M.J."/>
            <person name="Town C.D."/>
            <person name="Utterback T."/>
            <person name="Van Aken S."/>
            <person name="Vaysberg M."/>
            <person name="Vysotskaia V.S."/>
            <person name="Walker M."/>
            <person name="Wu D."/>
            <person name="Yu G."/>
            <person name="Fraser C.M."/>
            <person name="Venter J.C."/>
            <person name="Davis R.W."/>
        </authorList>
    </citation>
    <scope>NUCLEOTIDE SEQUENCE [LARGE SCALE GENOMIC DNA]</scope>
    <source>
        <strain>cv. Columbia</strain>
    </source>
</reference>
<reference key="2">
    <citation type="journal article" date="2017" name="Plant J.">
        <title>Araport11: a complete reannotation of the Arabidopsis thaliana reference genome.</title>
        <authorList>
            <person name="Cheng C.Y."/>
            <person name="Krishnakumar V."/>
            <person name="Chan A.P."/>
            <person name="Thibaud-Nissen F."/>
            <person name="Schobel S."/>
            <person name="Town C.D."/>
        </authorList>
    </citation>
    <scope>GENOME REANNOTATION</scope>
    <source>
        <strain>cv. Columbia</strain>
    </source>
</reference>
<reference key="3">
    <citation type="journal article" date="2003" name="Plant Mol. Biol.">
        <title>A unified nomenclature for Arabidopsis dynamin-related large GTPases based on homology and possible functions.</title>
        <authorList>
            <person name="Hong Z."/>
            <person name="Bednarek S.Y."/>
            <person name="Blumwald E."/>
            <person name="Hwang I."/>
            <person name="Jurgens G."/>
            <person name="Menzel D."/>
            <person name="Osteryoung K.W."/>
            <person name="Raikhel N.V."/>
            <person name="Shinozaki K."/>
            <person name="Tsutsumi N."/>
            <person name="Verma D.P.S."/>
        </authorList>
    </citation>
    <scope>GENE FAMILY</scope>
    <scope>NOMENCLATURE</scope>
</reference>
<proteinExistence type="evidence at transcript level"/>
<name>DRP4C_ARATH</name>
<protein>
    <recommendedName>
        <fullName>Dynamin-related protein 4C</fullName>
    </recommendedName>
</protein>